<dbReference type="EMBL" id="AJ009631">
    <property type="protein sequence ID" value="CAB54534.2"/>
    <property type="molecule type" value="Genomic_DNA"/>
</dbReference>
<dbReference type="RefSeq" id="WP_001375214.1">
    <property type="nucleotide sequence ID" value="NZ_WXYY01000001.1"/>
</dbReference>
<dbReference type="OMA" id="PANQIGA"/>
<dbReference type="GO" id="GO:0005576">
    <property type="term" value="C:extracellular region"/>
    <property type="evidence" value="ECO:0007669"/>
    <property type="project" value="UniProtKB-SubCell"/>
</dbReference>
<dbReference type="GO" id="GO:0020002">
    <property type="term" value="C:host cell plasma membrane"/>
    <property type="evidence" value="ECO:0007669"/>
    <property type="project" value="UniProtKB-SubCell"/>
</dbReference>
<dbReference type="GO" id="GO:0016020">
    <property type="term" value="C:membrane"/>
    <property type="evidence" value="ECO:0007669"/>
    <property type="project" value="UniProtKB-KW"/>
</dbReference>
<dbReference type="GO" id="GO:0042742">
    <property type="term" value="P:defense response to bacterium"/>
    <property type="evidence" value="ECO:0007669"/>
    <property type="project" value="UniProtKB-KW"/>
</dbReference>
<dbReference type="GO" id="GO:0031640">
    <property type="term" value="P:killing of cells of another organism"/>
    <property type="evidence" value="ECO:0007669"/>
    <property type="project" value="UniProtKB-KW"/>
</dbReference>
<feature type="propeptide" id="PRO_0000021660" evidence="1">
    <location>
        <begin position="1"/>
        <end position="15"/>
    </location>
</feature>
<feature type="chain" id="PRO_0000021661" description="Microcin H47">
    <location>
        <begin position="16"/>
        <end position="75"/>
    </location>
</feature>
<feature type="transmembrane region" description="Helical" evidence="1">
    <location>
        <begin position="30"/>
        <end position="50"/>
    </location>
</feature>
<reference key="1">
    <citation type="journal article" date="1999" name="Antimicrob. Agents Chemother.">
        <title>The structural gene for microcin H47 encodes a peptide precursor with antibiotic activity.</title>
        <authorList>
            <person name="Rodriguez E."/>
            <person name="Gaggero C."/>
            <person name="Lavina M."/>
        </authorList>
    </citation>
    <scope>NUCLEOTIDE SEQUENCE [GENOMIC DNA]</scope>
    <source>
        <strain>H47</strain>
    </source>
</reference>
<reference key="2">
    <citation type="journal article" date="2001" name="Antimicrob. Agents Chemother.">
        <title>The structure, function, and origin of the microcin H47 ATP-binding cassette exporter indicate its relatedness to that of colicin V.</title>
        <authorList>
            <person name="Azpiroz M.F."/>
            <person name="Rodriguez E."/>
            <person name="Lavina M."/>
        </authorList>
    </citation>
    <scope>CHARACTERIZATION</scope>
    <source>
        <strain>H47</strain>
    </source>
</reference>
<evidence type="ECO:0000255" key="1"/>
<evidence type="ECO:0000305" key="2"/>
<keyword id="KW-0044">Antibiotic</keyword>
<keyword id="KW-0929">Antimicrobial</keyword>
<keyword id="KW-0078">Bacteriocin</keyword>
<keyword id="KW-1032">Host cell membrane</keyword>
<keyword id="KW-1043">Host membrane</keyword>
<keyword id="KW-0472">Membrane</keyword>
<keyword id="KW-0964">Secreted</keyword>
<keyword id="KW-0812">Transmembrane</keyword>
<keyword id="KW-1133">Transmembrane helix</keyword>
<proteinExistence type="evidence at protein level"/>
<gene>
    <name type="primary">mchB</name>
</gene>
<sequence>MREITESQLRYISGAGGAPATSANAAGAAAIVGALAGIPGGPLGVVVGAVSAGLTTAIGSTVGSGSASSSAGGGS</sequence>
<name>MCHB_ECOLX</name>
<accession>P62530</accession>
<accession>Q9RM53</accession>
<organism>
    <name type="scientific">Escherichia coli</name>
    <dbReference type="NCBI Taxonomy" id="562"/>
    <lineage>
        <taxon>Bacteria</taxon>
        <taxon>Pseudomonadati</taxon>
        <taxon>Pseudomonadota</taxon>
        <taxon>Gammaproteobacteria</taxon>
        <taxon>Enterobacterales</taxon>
        <taxon>Enterobacteriaceae</taxon>
        <taxon>Escherichia</taxon>
    </lineage>
</organism>
<comment type="function">
    <text>Bactericidal antibiotic. Active on bacteria phylogenetically related to the producing strain.</text>
</comment>
<comment type="subcellular location">
    <subcellularLocation>
        <location>Secreted</location>
    </subcellularLocation>
    <subcellularLocation>
        <location evidence="2">Host cell membrane</location>
        <topology evidence="2">Single-pass membrane protein</topology>
    </subcellularLocation>
    <text>Probably through the MchEF ABC transporter system.</text>
</comment>
<protein>
    <recommendedName>
        <fullName>Microcin H47</fullName>
        <shortName>MccH47</shortName>
    </recommendedName>
</protein>